<reference key="1">
    <citation type="journal article" date="2004" name="J. Bacteriol.">
        <title>Comparative genomics of two Leptospira interrogans serovars reveals novel insights into physiology and pathogenesis.</title>
        <authorList>
            <person name="Nascimento A.L.T.O."/>
            <person name="Ko A.I."/>
            <person name="Martins E.A.L."/>
            <person name="Monteiro-Vitorello C.B."/>
            <person name="Ho P.L."/>
            <person name="Haake D.A."/>
            <person name="Verjovski-Almeida S."/>
            <person name="Hartskeerl R.A."/>
            <person name="Marques M.V."/>
            <person name="Oliveira M.C."/>
            <person name="Menck C.F.M."/>
            <person name="Leite L.C.C."/>
            <person name="Carrer H."/>
            <person name="Coutinho L.L."/>
            <person name="Degrave W.M."/>
            <person name="Dellagostin O.A."/>
            <person name="El-Dorry H."/>
            <person name="Ferro E.S."/>
            <person name="Ferro M.I.T."/>
            <person name="Furlan L.R."/>
            <person name="Gamberini M."/>
            <person name="Giglioti E.A."/>
            <person name="Goes-Neto A."/>
            <person name="Goldman G.H."/>
            <person name="Goldman M.H.S."/>
            <person name="Harakava R."/>
            <person name="Jeronimo S.M.B."/>
            <person name="Junqueira-de-Azevedo I.L.M."/>
            <person name="Kimura E.T."/>
            <person name="Kuramae E.E."/>
            <person name="Lemos E.G.M."/>
            <person name="Lemos M.V.F."/>
            <person name="Marino C.L."/>
            <person name="Nunes L.R."/>
            <person name="de Oliveira R.C."/>
            <person name="Pereira G.G."/>
            <person name="Reis M.S."/>
            <person name="Schriefer A."/>
            <person name="Siqueira W.J."/>
            <person name="Sommer P."/>
            <person name="Tsai S.M."/>
            <person name="Simpson A.J.G."/>
            <person name="Ferro J.A."/>
            <person name="Camargo L.E.A."/>
            <person name="Kitajima J.P."/>
            <person name="Setubal J.C."/>
            <person name="Van Sluys M.A."/>
        </authorList>
    </citation>
    <scope>NUCLEOTIDE SEQUENCE [LARGE SCALE GENOMIC DNA]</scope>
    <source>
        <strain>Fiocruz L1-130</strain>
    </source>
</reference>
<evidence type="ECO:0000255" key="1">
    <source>
        <dbReference type="HAMAP-Rule" id="MF_01569"/>
    </source>
</evidence>
<name>SYP_LEPIC</name>
<sequence length="576" mass="64843">MKASKYILPTEKENPADAVVASHRLMIRAGLVRKSSAGLYFYLPLGLKVLKKIEQIVREEMNSTGALEFDLPILTPSDFWEQSGRWSAMGKEMFRIQDRHDLSYALGPTHEESFSFLLKPLLKSYKDLPVNVYQIQTKFRDEIRPRFGVIRSREFIMKDAYSFHIDDSSLDDTYQAMRVAYRKIFDRCGLKTIPVQADSGSMGGSASEEFMVVSPIGEETLLLCNSCGYSSNSEKTPLILKKENGSAKFSEKKEISTPGKKTISEVSTLLGVSESETIKAVALKSEKKKILVFLRGDLELNLHKLHSLLKIADSEPMTDLEIRELGLIPGFISPIAPNDKIKVLYDRSLQKDFPYVVGSSKEDFHTQGFILEKEISGLPEFADVALAREGDLCPNCSSPLKAEKGIEVGHIFKLGDKYTKAFGIQVLDQNGKSKTLTTGCYGIGVNRTMATVIEQCNDEKGIFWPISIAPFEVSLVSIVKGEDQYSKIEEFYNVLINEGIEVFWDDRDLGPGFKLKDSELIGFPIRITIGKKFFESGEISIYNRKKDQEDSFVFSGFDDLVARVESMRQELFTELR</sequence>
<protein>
    <recommendedName>
        <fullName evidence="1">Proline--tRNA ligase</fullName>
        <ecNumber evidence="1">6.1.1.15</ecNumber>
    </recommendedName>
    <alternativeName>
        <fullName evidence="1">Prolyl-tRNA synthetase</fullName>
        <shortName evidence="1">ProRS</shortName>
    </alternativeName>
</protein>
<proteinExistence type="inferred from homology"/>
<organism>
    <name type="scientific">Leptospira interrogans serogroup Icterohaemorrhagiae serovar copenhageni (strain Fiocruz L1-130)</name>
    <dbReference type="NCBI Taxonomy" id="267671"/>
    <lineage>
        <taxon>Bacteria</taxon>
        <taxon>Pseudomonadati</taxon>
        <taxon>Spirochaetota</taxon>
        <taxon>Spirochaetia</taxon>
        <taxon>Leptospirales</taxon>
        <taxon>Leptospiraceae</taxon>
        <taxon>Leptospira</taxon>
    </lineage>
</organism>
<accession>Q72U06</accession>
<comment type="function">
    <text evidence="1">Catalyzes the attachment of proline to tRNA(Pro) in a two-step reaction: proline is first activated by ATP to form Pro-AMP and then transferred to the acceptor end of tRNA(Pro). As ProRS can inadvertently accommodate and process non-cognate amino acids such as alanine and cysteine, to avoid such errors it has two additional distinct editing activities against alanine. One activity is designated as 'pretransfer' editing and involves the tRNA(Pro)-independent hydrolysis of activated Ala-AMP. The other activity is designated 'posttransfer' editing and involves deacylation of mischarged Ala-tRNA(Pro). The misacylated Cys-tRNA(Pro) is not edited by ProRS.</text>
</comment>
<comment type="catalytic activity">
    <reaction evidence="1">
        <text>tRNA(Pro) + L-proline + ATP = L-prolyl-tRNA(Pro) + AMP + diphosphate</text>
        <dbReference type="Rhea" id="RHEA:14305"/>
        <dbReference type="Rhea" id="RHEA-COMP:9700"/>
        <dbReference type="Rhea" id="RHEA-COMP:9702"/>
        <dbReference type="ChEBI" id="CHEBI:30616"/>
        <dbReference type="ChEBI" id="CHEBI:33019"/>
        <dbReference type="ChEBI" id="CHEBI:60039"/>
        <dbReference type="ChEBI" id="CHEBI:78442"/>
        <dbReference type="ChEBI" id="CHEBI:78532"/>
        <dbReference type="ChEBI" id="CHEBI:456215"/>
        <dbReference type="EC" id="6.1.1.15"/>
    </reaction>
</comment>
<comment type="subunit">
    <text evidence="1">Homodimer.</text>
</comment>
<comment type="subcellular location">
    <subcellularLocation>
        <location evidence="1">Cytoplasm</location>
    </subcellularLocation>
</comment>
<comment type="domain">
    <text evidence="1">Consists of three domains: the N-terminal catalytic domain, the editing domain and the C-terminal anticodon-binding domain.</text>
</comment>
<comment type="similarity">
    <text evidence="1">Belongs to the class-II aminoacyl-tRNA synthetase family. ProS type 1 subfamily.</text>
</comment>
<feature type="chain" id="PRO_0000248717" description="Proline--tRNA ligase">
    <location>
        <begin position="1"/>
        <end position="576"/>
    </location>
</feature>
<dbReference type="EC" id="6.1.1.15" evidence="1"/>
<dbReference type="EMBL" id="AE016823">
    <property type="protein sequence ID" value="AAS69472.1"/>
    <property type="molecule type" value="Genomic_DNA"/>
</dbReference>
<dbReference type="RefSeq" id="WP_000647839.1">
    <property type="nucleotide sequence ID" value="NC_005823.1"/>
</dbReference>
<dbReference type="SMR" id="Q72U06"/>
<dbReference type="KEGG" id="lic:LIC_10858"/>
<dbReference type="HOGENOM" id="CLU_016739_0_0_12"/>
<dbReference type="Proteomes" id="UP000007037">
    <property type="component" value="Chromosome I"/>
</dbReference>
<dbReference type="GO" id="GO:0005829">
    <property type="term" value="C:cytosol"/>
    <property type="evidence" value="ECO:0007669"/>
    <property type="project" value="TreeGrafter"/>
</dbReference>
<dbReference type="GO" id="GO:0002161">
    <property type="term" value="F:aminoacyl-tRNA deacylase activity"/>
    <property type="evidence" value="ECO:0007669"/>
    <property type="project" value="InterPro"/>
</dbReference>
<dbReference type="GO" id="GO:0005524">
    <property type="term" value="F:ATP binding"/>
    <property type="evidence" value="ECO:0007669"/>
    <property type="project" value="UniProtKB-UniRule"/>
</dbReference>
<dbReference type="GO" id="GO:0004827">
    <property type="term" value="F:proline-tRNA ligase activity"/>
    <property type="evidence" value="ECO:0007669"/>
    <property type="project" value="UniProtKB-UniRule"/>
</dbReference>
<dbReference type="GO" id="GO:0006433">
    <property type="term" value="P:prolyl-tRNA aminoacylation"/>
    <property type="evidence" value="ECO:0007669"/>
    <property type="project" value="UniProtKB-UniRule"/>
</dbReference>
<dbReference type="CDD" id="cd04334">
    <property type="entry name" value="ProRS-INS"/>
    <property type="match status" value="1"/>
</dbReference>
<dbReference type="CDD" id="cd00861">
    <property type="entry name" value="ProRS_anticodon_short"/>
    <property type="match status" value="1"/>
</dbReference>
<dbReference type="CDD" id="cd00779">
    <property type="entry name" value="ProRS_core_prok"/>
    <property type="match status" value="1"/>
</dbReference>
<dbReference type="FunFam" id="3.30.930.10:FF:000150">
    <property type="entry name" value="Proline--tRNA ligase"/>
    <property type="match status" value="1"/>
</dbReference>
<dbReference type="Gene3D" id="3.40.50.800">
    <property type="entry name" value="Anticodon-binding domain"/>
    <property type="match status" value="1"/>
</dbReference>
<dbReference type="Gene3D" id="3.30.930.10">
    <property type="entry name" value="Bira Bifunctional Protein, Domain 2"/>
    <property type="match status" value="2"/>
</dbReference>
<dbReference type="HAMAP" id="MF_01569">
    <property type="entry name" value="Pro_tRNA_synth_type1"/>
    <property type="match status" value="1"/>
</dbReference>
<dbReference type="InterPro" id="IPR002314">
    <property type="entry name" value="aa-tRNA-synt_IIb"/>
</dbReference>
<dbReference type="InterPro" id="IPR006195">
    <property type="entry name" value="aa-tRNA-synth_II"/>
</dbReference>
<dbReference type="InterPro" id="IPR045864">
    <property type="entry name" value="aa-tRNA-synth_II/BPL/LPL"/>
</dbReference>
<dbReference type="InterPro" id="IPR004154">
    <property type="entry name" value="Anticodon-bd"/>
</dbReference>
<dbReference type="InterPro" id="IPR036621">
    <property type="entry name" value="Anticodon-bd_dom_sf"/>
</dbReference>
<dbReference type="InterPro" id="IPR002316">
    <property type="entry name" value="Pro-tRNA-ligase_IIa"/>
</dbReference>
<dbReference type="InterPro" id="IPR004500">
    <property type="entry name" value="Pro-tRNA-synth_IIa_bac-type"/>
</dbReference>
<dbReference type="InterPro" id="IPR023717">
    <property type="entry name" value="Pro-tRNA-Synthase_IIa_type1"/>
</dbReference>
<dbReference type="InterPro" id="IPR050062">
    <property type="entry name" value="Pro-tRNA_synthetase"/>
</dbReference>
<dbReference type="InterPro" id="IPR044140">
    <property type="entry name" value="ProRS_anticodon_short"/>
</dbReference>
<dbReference type="InterPro" id="IPR033730">
    <property type="entry name" value="ProRS_core_prok"/>
</dbReference>
<dbReference type="InterPro" id="IPR036754">
    <property type="entry name" value="YbaK/aa-tRNA-synt-asso_dom_sf"/>
</dbReference>
<dbReference type="InterPro" id="IPR007214">
    <property type="entry name" value="YbaK/aa-tRNA-synth-assoc-dom"/>
</dbReference>
<dbReference type="NCBIfam" id="NF006625">
    <property type="entry name" value="PRK09194.1"/>
    <property type="match status" value="1"/>
</dbReference>
<dbReference type="NCBIfam" id="TIGR00409">
    <property type="entry name" value="proS_fam_II"/>
    <property type="match status" value="1"/>
</dbReference>
<dbReference type="PANTHER" id="PTHR42753">
    <property type="entry name" value="MITOCHONDRIAL RIBOSOME PROTEIN L39/PROLYL-TRNA LIGASE FAMILY MEMBER"/>
    <property type="match status" value="1"/>
</dbReference>
<dbReference type="PANTHER" id="PTHR42753:SF2">
    <property type="entry name" value="PROLINE--TRNA LIGASE"/>
    <property type="match status" value="1"/>
</dbReference>
<dbReference type="Pfam" id="PF03129">
    <property type="entry name" value="HGTP_anticodon"/>
    <property type="match status" value="1"/>
</dbReference>
<dbReference type="Pfam" id="PF00587">
    <property type="entry name" value="tRNA-synt_2b"/>
    <property type="match status" value="1"/>
</dbReference>
<dbReference type="Pfam" id="PF04073">
    <property type="entry name" value="tRNA_edit"/>
    <property type="match status" value="1"/>
</dbReference>
<dbReference type="PRINTS" id="PR01046">
    <property type="entry name" value="TRNASYNTHPRO"/>
</dbReference>
<dbReference type="SUPFAM" id="SSF52954">
    <property type="entry name" value="Class II aaRS ABD-related"/>
    <property type="match status" value="1"/>
</dbReference>
<dbReference type="SUPFAM" id="SSF55681">
    <property type="entry name" value="Class II aaRS and biotin synthetases"/>
    <property type="match status" value="1"/>
</dbReference>
<dbReference type="SUPFAM" id="SSF55826">
    <property type="entry name" value="YbaK/ProRS associated domain"/>
    <property type="match status" value="1"/>
</dbReference>
<dbReference type="PROSITE" id="PS50862">
    <property type="entry name" value="AA_TRNA_LIGASE_II"/>
    <property type="match status" value="1"/>
</dbReference>
<gene>
    <name evidence="1" type="primary">proS</name>
    <name type="ordered locus">LIC_10858</name>
</gene>
<keyword id="KW-0030">Aminoacyl-tRNA synthetase</keyword>
<keyword id="KW-0067">ATP-binding</keyword>
<keyword id="KW-0963">Cytoplasm</keyword>
<keyword id="KW-0436">Ligase</keyword>
<keyword id="KW-0547">Nucleotide-binding</keyword>
<keyword id="KW-0648">Protein biosynthesis</keyword>